<name>PLSY_ANAMF</name>
<comment type="function">
    <text evidence="1">Catalyzes the transfer of an acyl group from acyl-phosphate (acyl-PO(4)) to glycerol-3-phosphate (G3P) to form lysophosphatidic acid (LPA). This enzyme utilizes acyl-phosphate as fatty acyl donor, but not acyl-CoA or acyl-ACP.</text>
</comment>
<comment type="catalytic activity">
    <reaction evidence="1">
        <text>an acyl phosphate + sn-glycerol 3-phosphate = a 1-acyl-sn-glycero-3-phosphate + phosphate</text>
        <dbReference type="Rhea" id="RHEA:34075"/>
        <dbReference type="ChEBI" id="CHEBI:43474"/>
        <dbReference type="ChEBI" id="CHEBI:57597"/>
        <dbReference type="ChEBI" id="CHEBI:57970"/>
        <dbReference type="ChEBI" id="CHEBI:59918"/>
        <dbReference type="EC" id="2.3.1.275"/>
    </reaction>
</comment>
<comment type="pathway">
    <text evidence="1">Lipid metabolism; phospholipid metabolism.</text>
</comment>
<comment type="subunit">
    <text evidence="1">Probably interacts with PlsX.</text>
</comment>
<comment type="subcellular location">
    <subcellularLocation>
        <location evidence="1">Cell inner membrane</location>
        <topology evidence="1">Multi-pass membrane protein</topology>
    </subcellularLocation>
</comment>
<comment type="similarity">
    <text evidence="1">Belongs to the PlsY family.</text>
</comment>
<feature type="chain" id="PRO_1000149562" description="Glycerol-3-phosphate acyltransferase">
    <location>
        <begin position="1"/>
        <end position="198"/>
    </location>
</feature>
<feature type="transmembrane region" description="Helical" evidence="1">
    <location>
        <begin position="10"/>
        <end position="30"/>
    </location>
</feature>
<feature type="transmembrane region" description="Helical" evidence="1">
    <location>
        <begin position="57"/>
        <end position="77"/>
    </location>
</feature>
<feature type="transmembrane region" description="Helical" evidence="1">
    <location>
        <begin position="86"/>
        <end position="106"/>
    </location>
</feature>
<feature type="transmembrane region" description="Helical" evidence="1">
    <location>
        <begin position="118"/>
        <end position="138"/>
    </location>
</feature>
<feature type="transmembrane region" description="Helical" evidence="1">
    <location>
        <begin position="160"/>
        <end position="180"/>
    </location>
</feature>
<sequence length="198" mass="22391">MNLLMGYTYLIPILFASYLIGSIPFSWILVKVFYKRDLRSVGSGNIGATNAFRVNRGISFLVLLLDIFKSVLVILILEKMCAHKSIMYLTGFTVVLGHIFPVWFLFKGGKGIAPTIGVVLSINIKIFFLFIITWAVVFMIFRYSSLSSIISIISSCIYCAVTENFNSSIFYIAMSIIVLIKHRDNVIRMINGTEKKLF</sequence>
<dbReference type="EC" id="2.3.1.275" evidence="1"/>
<dbReference type="EMBL" id="CP001079">
    <property type="protein sequence ID" value="ACM49798.1"/>
    <property type="molecule type" value="Genomic_DNA"/>
</dbReference>
<dbReference type="SMR" id="B9KH94"/>
<dbReference type="STRING" id="320483.AMF_980"/>
<dbReference type="KEGG" id="amf:AMF_980"/>
<dbReference type="eggNOG" id="COG0344">
    <property type="taxonomic scope" value="Bacteria"/>
</dbReference>
<dbReference type="HOGENOM" id="CLU_081254_4_0_5"/>
<dbReference type="UniPathway" id="UPA00085"/>
<dbReference type="Proteomes" id="UP000007307">
    <property type="component" value="Chromosome"/>
</dbReference>
<dbReference type="GO" id="GO:0005886">
    <property type="term" value="C:plasma membrane"/>
    <property type="evidence" value="ECO:0007669"/>
    <property type="project" value="UniProtKB-SubCell"/>
</dbReference>
<dbReference type="GO" id="GO:0043772">
    <property type="term" value="F:acyl-phosphate glycerol-3-phosphate acyltransferase activity"/>
    <property type="evidence" value="ECO:0007669"/>
    <property type="project" value="UniProtKB-UniRule"/>
</dbReference>
<dbReference type="GO" id="GO:0008654">
    <property type="term" value="P:phospholipid biosynthetic process"/>
    <property type="evidence" value="ECO:0007669"/>
    <property type="project" value="UniProtKB-UniRule"/>
</dbReference>
<dbReference type="HAMAP" id="MF_01043">
    <property type="entry name" value="PlsY"/>
    <property type="match status" value="1"/>
</dbReference>
<dbReference type="InterPro" id="IPR003811">
    <property type="entry name" value="G3P_acylTferase_PlsY"/>
</dbReference>
<dbReference type="NCBIfam" id="TIGR00023">
    <property type="entry name" value="glycerol-3-phosphate 1-O-acyltransferase PlsY"/>
    <property type="match status" value="1"/>
</dbReference>
<dbReference type="PANTHER" id="PTHR30309:SF0">
    <property type="entry name" value="GLYCEROL-3-PHOSPHATE ACYLTRANSFERASE-RELATED"/>
    <property type="match status" value="1"/>
</dbReference>
<dbReference type="PANTHER" id="PTHR30309">
    <property type="entry name" value="INNER MEMBRANE PROTEIN YGIH"/>
    <property type="match status" value="1"/>
</dbReference>
<dbReference type="Pfam" id="PF02660">
    <property type="entry name" value="G3P_acyltransf"/>
    <property type="match status" value="1"/>
</dbReference>
<dbReference type="SMART" id="SM01207">
    <property type="entry name" value="G3P_acyltransf"/>
    <property type="match status" value="1"/>
</dbReference>
<proteinExistence type="inferred from homology"/>
<protein>
    <recommendedName>
        <fullName evidence="1">Glycerol-3-phosphate acyltransferase</fullName>
    </recommendedName>
    <alternativeName>
        <fullName evidence="1">Acyl-PO4 G3P acyltransferase</fullName>
    </alternativeName>
    <alternativeName>
        <fullName evidence="1">Acyl-phosphate--glycerol-3-phosphate acyltransferase</fullName>
    </alternativeName>
    <alternativeName>
        <fullName evidence="1">G3P acyltransferase</fullName>
        <shortName evidence="1">GPAT</shortName>
        <ecNumber evidence="1">2.3.1.275</ecNumber>
    </alternativeName>
    <alternativeName>
        <fullName evidence="1">Lysophosphatidic acid synthase</fullName>
        <shortName evidence="1">LPA synthase</shortName>
    </alternativeName>
</protein>
<gene>
    <name evidence="1" type="primary">plsY</name>
    <name type="ordered locus">AMF_980</name>
</gene>
<organism>
    <name type="scientific">Anaplasma marginale (strain Florida)</name>
    <dbReference type="NCBI Taxonomy" id="320483"/>
    <lineage>
        <taxon>Bacteria</taxon>
        <taxon>Pseudomonadati</taxon>
        <taxon>Pseudomonadota</taxon>
        <taxon>Alphaproteobacteria</taxon>
        <taxon>Rickettsiales</taxon>
        <taxon>Anaplasmataceae</taxon>
        <taxon>Anaplasma</taxon>
    </lineage>
</organism>
<accession>B9KH94</accession>
<keyword id="KW-0997">Cell inner membrane</keyword>
<keyword id="KW-1003">Cell membrane</keyword>
<keyword id="KW-0444">Lipid biosynthesis</keyword>
<keyword id="KW-0443">Lipid metabolism</keyword>
<keyword id="KW-0472">Membrane</keyword>
<keyword id="KW-0594">Phospholipid biosynthesis</keyword>
<keyword id="KW-1208">Phospholipid metabolism</keyword>
<keyword id="KW-1185">Reference proteome</keyword>
<keyword id="KW-0808">Transferase</keyword>
<keyword id="KW-0812">Transmembrane</keyword>
<keyword id="KW-1133">Transmembrane helix</keyword>
<evidence type="ECO:0000255" key="1">
    <source>
        <dbReference type="HAMAP-Rule" id="MF_01043"/>
    </source>
</evidence>
<reference key="1">
    <citation type="journal article" date="2009" name="BMC Genomics">
        <title>Conservation in the face of diversity: multistrain analysis of an intracellular bacterium.</title>
        <authorList>
            <person name="Dark M.J."/>
            <person name="Herndon D.R."/>
            <person name="Kappmeyer L.S."/>
            <person name="Gonzales M.P."/>
            <person name="Nordeen E."/>
            <person name="Palmer G.H."/>
            <person name="Knowles D.P. Jr."/>
            <person name="Brayton K.A."/>
        </authorList>
    </citation>
    <scope>NUCLEOTIDE SEQUENCE [LARGE SCALE GENOMIC DNA]</scope>
    <source>
        <strain>Florida</strain>
    </source>
</reference>